<comment type="function">
    <text evidence="1">Catalyzes the condensation of (S)-aspartate-beta-semialdehyde [(S)-ASA] and pyruvate to 4-hydroxy-tetrahydrodipicolinate (HTPA).</text>
</comment>
<comment type="catalytic activity">
    <reaction evidence="1">
        <text>L-aspartate 4-semialdehyde + pyruvate = (2S,4S)-4-hydroxy-2,3,4,5-tetrahydrodipicolinate + H2O + H(+)</text>
        <dbReference type="Rhea" id="RHEA:34171"/>
        <dbReference type="ChEBI" id="CHEBI:15361"/>
        <dbReference type="ChEBI" id="CHEBI:15377"/>
        <dbReference type="ChEBI" id="CHEBI:15378"/>
        <dbReference type="ChEBI" id="CHEBI:67139"/>
        <dbReference type="ChEBI" id="CHEBI:537519"/>
        <dbReference type="EC" id="4.3.3.7"/>
    </reaction>
</comment>
<comment type="pathway">
    <text evidence="1">Amino-acid biosynthesis; L-lysine biosynthesis via DAP pathway; (S)-tetrahydrodipicolinate from L-aspartate: step 3/4.</text>
</comment>
<comment type="subunit">
    <text evidence="1">Homotetramer; dimer of dimers.</text>
</comment>
<comment type="subcellular location">
    <subcellularLocation>
        <location evidence="1">Cytoplasm</location>
    </subcellularLocation>
</comment>
<comment type="similarity">
    <text evidence="1">Belongs to the DapA family.</text>
</comment>
<comment type="caution">
    <text evidence="2">Was originally thought to be a dihydrodipicolinate synthase (DHDPS), catalyzing the condensation of (S)-aspartate-beta-semialdehyde [(S)-ASA] and pyruvate to dihydrodipicolinate (DHDP). However, it was shown in E.coli that the product of the enzymatic reaction is not dihydrodipicolinate but in fact (4S)-4-hydroxy-2,3,4,5-tetrahydro-(2S)-dipicolinic acid (HTPA), and that the consecutive dehydration reaction leading to DHDP is not spontaneous but catalyzed by DapB.</text>
</comment>
<keyword id="KW-0028">Amino-acid biosynthesis</keyword>
<keyword id="KW-0963">Cytoplasm</keyword>
<keyword id="KW-0220">Diaminopimelate biosynthesis</keyword>
<keyword id="KW-0456">Lyase</keyword>
<keyword id="KW-0457">Lysine biosynthesis</keyword>
<keyword id="KW-0704">Schiff base</keyword>
<reference key="1">
    <citation type="journal article" date="2009" name="J. Bacteriol.">
        <title>Role of conjugative elements in the evolution of the multidrug-resistant pandemic clone Streptococcus pneumoniae Spain23F ST81.</title>
        <authorList>
            <person name="Croucher N.J."/>
            <person name="Walker D."/>
            <person name="Romero P."/>
            <person name="Lennard N."/>
            <person name="Paterson G.K."/>
            <person name="Bason N.C."/>
            <person name="Mitchell A.M."/>
            <person name="Quail M.A."/>
            <person name="Andrew P.W."/>
            <person name="Parkhill J."/>
            <person name="Bentley S.D."/>
            <person name="Mitchell T.J."/>
        </authorList>
    </citation>
    <scope>NUCLEOTIDE SEQUENCE [LARGE SCALE GENOMIC DNA]</scope>
    <source>
        <strain>ATCC 700669 / Spain 23F-1</strain>
    </source>
</reference>
<protein>
    <recommendedName>
        <fullName evidence="1">4-hydroxy-tetrahydrodipicolinate synthase</fullName>
        <shortName evidence="1">HTPA synthase</shortName>
        <ecNumber evidence="1">4.3.3.7</ecNumber>
    </recommendedName>
</protein>
<organism>
    <name type="scientific">Streptococcus pneumoniae (strain ATCC 700669 / Spain 23F-1)</name>
    <dbReference type="NCBI Taxonomy" id="561276"/>
    <lineage>
        <taxon>Bacteria</taxon>
        <taxon>Bacillati</taxon>
        <taxon>Bacillota</taxon>
        <taxon>Bacilli</taxon>
        <taxon>Lactobacillales</taxon>
        <taxon>Streptococcaceae</taxon>
        <taxon>Streptococcus</taxon>
    </lineage>
</organism>
<feature type="chain" id="PRO_1000134879" description="4-hydroxy-tetrahydrodipicolinate synthase">
    <location>
        <begin position="1"/>
        <end position="311"/>
    </location>
</feature>
<feature type="active site" description="Proton donor/acceptor" evidence="1">
    <location>
        <position position="140"/>
    </location>
</feature>
<feature type="active site" description="Schiff-base intermediate with substrate" evidence="1">
    <location>
        <position position="168"/>
    </location>
</feature>
<feature type="binding site" evidence="1">
    <location>
        <position position="51"/>
    </location>
    <ligand>
        <name>pyruvate</name>
        <dbReference type="ChEBI" id="CHEBI:15361"/>
    </ligand>
</feature>
<feature type="binding site" evidence="1">
    <location>
        <position position="209"/>
    </location>
    <ligand>
        <name>pyruvate</name>
        <dbReference type="ChEBI" id="CHEBI:15361"/>
    </ligand>
</feature>
<feature type="site" description="Part of a proton relay during catalysis" evidence="1">
    <location>
        <position position="50"/>
    </location>
</feature>
<feature type="site" description="Part of a proton relay during catalysis" evidence="1">
    <location>
        <position position="114"/>
    </location>
</feature>
<proteinExistence type="inferred from homology"/>
<name>DAPA_STRPJ</name>
<accession>B8ZPG7</accession>
<evidence type="ECO:0000255" key="1">
    <source>
        <dbReference type="HAMAP-Rule" id="MF_00418"/>
    </source>
</evidence>
<evidence type="ECO:0000305" key="2"/>
<gene>
    <name evidence="1" type="primary">dapA</name>
    <name type="ordered locus">SPN23F09390</name>
</gene>
<sequence>MSYQDLKECKIITAFITPFHEDGSINFDAIPALIEHLLAHHTDGILLAGTTAESPTLTHDEELELFAAVQKVVNGRVPLIAGVGTNDTRDSIEFVKEVAEFGGFAAGLAIVPYYNKPSQEGMYQHFKAIADASDLPIIIYNIPGRVVVELTPETMLRLADHPNIIGVKECTSLANMAYLIEHKPEEFLIYTGEDGDAFHAMNLGADGVISVASHTNGDEMHEMFTAIAESDMKKAAAIQRKFIPKVNALFSYPSPAPVKAILNYMGFEAGPTRLPLVPAPEEDAKRIIKVVVDGDYEATKATVTGVLRPDY</sequence>
<dbReference type="EC" id="4.3.3.7" evidence="1"/>
<dbReference type="EMBL" id="FM211187">
    <property type="protein sequence ID" value="CAR68764.1"/>
    <property type="molecule type" value="Genomic_DNA"/>
</dbReference>
<dbReference type="RefSeq" id="WP_000121618.1">
    <property type="nucleotide sequence ID" value="NC_011900.1"/>
</dbReference>
<dbReference type="SMR" id="B8ZPG7"/>
<dbReference type="KEGG" id="sne:SPN23F09390"/>
<dbReference type="HOGENOM" id="CLU_049343_7_1_9"/>
<dbReference type="UniPathway" id="UPA00034">
    <property type="reaction ID" value="UER00017"/>
</dbReference>
<dbReference type="GO" id="GO:0005829">
    <property type="term" value="C:cytosol"/>
    <property type="evidence" value="ECO:0007669"/>
    <property type="project" value="TreeGrafter"/>
</dbReference>
<dbReference type="GO" id="GO:0008840">
    <property type="term" value="F:4-hydroxy-tetrahydrodipicolinate synthase activity"/>
    <property type="evidence" value="ECO:0007669"/>
    <property type="project" value="UniProtKB-UniRule"/>
</dbReference>
<dbReference type="GO" id="GO:0019877">
    <property type="term" value="P:diaminopimelate biosynthetic process"/>
    <property type="evidence" value="ECO:0007669"/>
    <property type="project" value="UniProtKB-UniRule"/>
</dbReference>
<dbReference type="GO" id="GO:0009089">
    <property type="term" value="P:lysine biosynthetic process via diaminopimelate"/>
    <property type="evidence" value="ECO:0007669"/>
    <property type="project" value="UniProtKB-UniRule"/>
</dbReference>
<dbReference type="CDD" id="cd00950">
    <property type="entry name" value="DHDPS"/>
    <property type="match status" value="1"/>
</dbReference>
<dbReference type="Gene3D" id="3.20.20.70">
    <property type="entry name" value="Aldolase class I"/>
    <property type="match status" value="1"/>
</dbReference>
<dbReference type="HAMAP" id="MF_00418">
    <property type="entry name" value="DapA"/>
    <property type="match status" value="1"/>
</dbReference>
<dbReference type="InterPro" id="IPR013785">
    <property type="entry name" value="Aldolase_TIM"/>
</dbReference>
<dbReference type="InterPro" id="IPR005263">
    <property type="entry name" value="DapA"/>
</dbReference>
<dbReference type="InterPro" id="IPR002220">
    <property type="entry name" value="DapA-like"/>
</dbReference>
<dbReference type="InterPro" id="IPR020625">
    <property type="entry name" value="Schiff_base-form_aldolases_AS"/>
</dbReference>
<dbReference type="NCBIfam" id="TIGR00674">
    <property type="entry name" value="dapA"/>
    <property type="match status" value="1"/>
</dbReference>
<dbReference type="PANTHER" id="PTHR12128:SF66">
    <property type="entry name" value="4-HYDROXY-2-OXOGLUTARATE ALDOLASE, MITOCHONDRIAL"/>
    <property type="match status" value="1"/>
</dbReference>
<dbReference type="PANTHER" id="PTHR12128">
    <property type="entry name" value="DIHYDRODIPICOLINATE SYNTHASE"/>
    <property type="match status" value="1"/>
</dbReference>
<dbReference type="Pfam" id="PF00701">
    <property type="entry name" value="DHDPS"/>
    <property type="match status" value="1"/>
</dbReference>
<dbReference type="PIRSF" id="PIRSF001365">
    <property type="entry name" value="DHDPS"/>
    <property type="match status" value="1"/>
</dbReference>
<dbReference type="PRINTS" id="PR00146">
    <property type="entry name" value="DHPICSNTHASE"/>
</dbReference>
<dbReference type="SMART" id="SM01130">
    <property type="entry name" value="DHDPS"/>
    <property type="match status" value="1"/>
</dbReference>
<dbReference type="SUPFAM" id="SSF51569">
    <property type="entry name" value="Aldolase"/>
    <property type="match status" value="1"/>
</dbReference>
<dbReference type="PROSITE" id="PS00666">
    <property type="entry name" value="DHDPS_2"/>
    <property type="match status" value="1"/>
</dbReference>